<sequence length="317" mass="34938">MHNPQLTKDGKLKHLLTTEGLPRAILNQILDTAESFVGVAEREVKKVPLLRGKTVCNIFFENSTRTRTTFEIAAKRLSADVITLNVSTSSQSKGETILDTIDNLTAMHADMFVVRHAESGAAHFIARHVAPHIHVINAGDGRHAHPTQGLLDVFTIRRYKPDMHNLRVAVVGDVLHSRVARSEIHALTTLGVPEVRVIAPKTLLPQHVEKLGVHVYHDMREGLKDIDVVMMLRLQNERMNGSLLPSAQEYFKCYGLTPEKLAFAKPDAIVMHPGPMNRGVEIDSAVADGKQSVILPQVTYGIAVRMAVMSILAGNSE</sequence>
<dbReference type="EC" id="2.1.3.2" evidence="1"/>
<dbReference type="EMBL" id="CP000284">
    <property type="protein sequence ID" value="ABE50369.1"/>
    <property type="molecule type" value="Genomic_DNA"/>
</dbReference>
<dbReference type="RefSeq" id="WP_011480323.1">
    <property type="nucleotide sequence ID" value="NC_007947.1"/>
</dbReference>
<dbReference type="SMR" id="Q1GZG8"/>
<dbReference type="STRING" id="265072.Mfla_2102"/>
<dbReference type="KEGG" id="mfa:Mfla_2102"/>
<dbReference type="eggNOG" id="COG0540">
    <property type="taxonomic scope" value="Bacteria"/>
</dbReference>
<dbReference type="HOGENOM" id="CLU_043846_2_0_4"/>
<dbReference type="OrthoDB" id="9774690at2"/>
<dbReference type="UniPathway" id="UPA00070">
    <property type="reaction ID" value="UER00116"/>
</dbReference>
<dbReference type="Proteomes" id="UP000002440">
    <property type="component" value="Chromosome"/>
</dbReference>
<dbReference type="GO" id="GO:0005829">
    <property type="term" value="C:cytosol"/>
    <property type="evidence" value="ECO:0007669"/>
    <property type="project" value="TreeGrafter"/>
</dbReference>
<dbReference type="GO" id="GO:0016597">
    <property type="term" value="F:amino acid binding"/>
    <property type="evidence" value="ECO:0007669"/>
    <property type="project" value="InterPro"/>
</dbReference>
<dbReference type="GO" id="GO:0004070">
    <property type="term" value="F:aspartate carbamoyltransferase activity"/>
    <property type="evidence" value="ECO:0007669"/>
    <property type="project" value="UniProtKB-UniRule"/>
</dbReference>
<dbReference type="GO" id="GO:0006207">
    <property type="term" value="P:'de novo' pyrimidine nucleobase biosynthetic process"/>
    <property type="evidence" value="ECO:0007669"/>
    <property type="project" value="InterPro"/>
</dbReference>
<dbReference type="GO" id="GO:0044205">
    <property type="term" value="P:'de novo' UMP biosynthetic process"/>
    <property type="evidence" value="ECO:0007669"/>
    <property type="project" value="UniProtKB-UniRule"/>
</dbReference>
<dbReference type="GO" id="GO:0006520">
    <property type="term" value="P:amino acid metabolic process"/>
    <property type="evidence" value="ECO:0007669"/>
    <property type="project" value="InterPro"/>
</dbReference>
<dbReference type="FunFam" id="3.40.50.1370:FF:000006">
    <property type="entry name" value="Aspartate carbamoyltransferase"/>
    <property type="match status" value="1"/>
</dbReference>
<dbReference type="FunFam" id="3.40.50.1370:FF:000007">
    <property type="entry name" value="Aspartate carbamoyltransferase"/>
    <property type="match status" value="1"/>
</dbReference>
<dbReference type="Gene3D" id="3.40.50.1370">
    <property type="entry name" value="Aspartate/ornithine carbamoyltransferase"/>
    <property type="match status" value="2"/>
</dbReference>
<dbReference type="HAMAP" id="MF_00001">
    <property type="entry name" value="Asp_carb_tr"/>
    <property type="match status" value="1"/>
</dbReference>
<dbReference type="InterPro" id="IPR006132">
    <property type="entry name" value="Asp/Orn_carbamoyltranf_P-bd"/>
</dbReference>
<dbReference type="InterPro" id="IPR006130">
    <property type="entry name" value="Asp/Orn_carbamoylTrfase"/>
</dbReference>
<dbReference type="InterPro" id="IPR036901">
    <property type="entry name" value="Asp/Orn_carbamoylTrfase_sf"/>
</dbReference>
<dbReference type="InterPro" id="IPR002082">
    <property type="entry name" value="Asp_carbamoyltransf"/>
</dbReference>
<dbReference type="InterPro" id="IPR006131">
    <property type="entry name" value="Asp_carbamoyltransf_Asp/Orn-bd"/>
</dbReference>
<dbReference type="NCBIfam" id="TIGR00670">
    <property type="entry name" value="asp_carb_tr"/>
    <property type="match status" value="1"/>
</dbReference>
<dbReference type="NCBIfam" id="NF002032">
    <property type="entry name" value="PRK00856.1"/>
    <property type="match status" value="1"/>
</dbReference>
<dbReference type="PANTHER" id="PTHR45753:SF6">
    <property type="entry name" value="ASPARTATE CARBAMOYLTRANSFERASE"/>
    <property type="match status" value="1"/>
</dbReference>
<dbReference type="PANTHER" id="PTHR45753">
    <property type="entry name" value="ORNITHINE CARBAMOYLTRANSFERASE, MITOCHONDRIAL"/>
    <property type="match status" value="1"/>
</dbReference>
<dbReference type="Pfam" id="PF00185">
    <property type="entry name" value="OTCace"/>
    <property type="match status" value="1"/>
</dbReference>
<dbReference type="Pfam" id="PF02729">
    <property type="entry name" value="OTCace_N"/>
    <property type="match status" value="1"/>
</dbReference>
<dbReference type="PRINTS" id="PR00100">
    <property type="entry name" value="AOTCASE"/>
</dbReference>
<dbReference type="PRINTS" id="PR00101">
    <property type="entry name" value="ATCASE"/>
</dbReference>
<dbReference type="SUPFAM" id="SSF53671">
    <property type="entry name" value="Aspartate/ornithine carbamoyltransferase"/>
    <property type="match status" value="1"/>
</dbReference>
<dbReference type="PROSITE" id="PS00097">
    <property type="entry name" value="CARBAMOYLTRANSFERASE"/>
    <property type="match status" value="1"/>
</dbReference>
<comment type="function">
    <text evidence="1">Catalyzes the condensation of carbamoyl phosphate and aspartate to form carbamoyl aspartate and inorganic phosphate, the committed step in the de novo pyrimidine nucleotide biosynthesis pathway.</text>
</comment>
<comment type="catalytic activity">
    <reaction evidence="1">
        <text>carbamoyl phosphate + L-aspartate = N-carbamoyl-L-aspartate + phosphate + H(+)</text>
        <dbReference type="Rhea" id="RHEA:20013"/>
        <dbReference type="ChEBI" id="CHEBI:15378"/>
        <dbReference type="ChEBI" id="CHEBI:29991"/>
        <dbReference type="ChEBI" id="CHEBI:32814"/>
        <dbReference type="ChEBI" id="CHEBI:43474"/>
        <dbReference type="ChEBI" id="CHEBI:58228"/>
        <dbReference type="EC" id="2.1.3.2"/>
    </reaction>
</comment>
<comment type="pathway">
    <text evidence="1">Pyrimidine metabolism; UMP biosynthesis via de novo pathway; (S)-dihydroorotate from bicarbonate: step 2/3.</text>
</comment>
<comment type="subunit">
    <text evidence="1">Heterododecamer (2C3:3R2) of six catalytic PyrB chains organized as two trimers (C3), and six regulatory PyrI chains organized as three dimers (R2).</text>
</comment>
<comment type="similarity">
    <text evidence="1">Belongs to the aspartate/ornithine carbamoyltransferase superfamily. ATCase family.</text>
</comment>
<name>PYRB_METFK</name>
<evidence type="ECO:0000255" key="1">
    <source>
        <dbReference type="HAMAP-Rule" id="MF_00001"/>
    </source>
</evidence>
<proteinExistence type="inferred from homology"/>
<protein>
    <recommendedName>
        <fullName evidence="1">Aspartate carbamoyltransferase catalytic subunit</fullName>
        <ecNumber evidence="1">2.1.3.2</ecNumber>
    </recommendedName>
    <alternativeName>
        <fullName evidence="1">Aspartate transcarbamylase</fullName>
        <shortName evidence="1">ATCase</shortName>
    </alternativeName>
</protein>
<accession>Q1GZG8</accession>
<feature type="chain" id="PRO_0000301588" description="Aspartate carbamoyltransferase catalytic subunit">
    <location>
        <begin position="1"/>
        <end position="317"/>
    </location>
</feature>
<feature type="binding site" evidence="1">
    <location>
        <position position="65"/>
    </location>
    <ligand>
        <name>carbamoyl phosphate</name>
        <dbReference type="ChEBI" id="CHEBI:58228"/>
    </ligand>
</feature>
<feature type="binding site" evidence="1">
    <location>
        <position position="66"/>
    </location>
    <ligand>
        <name>carbamoyl phosphate</name>
        <dbReference type="ChEBI" id="CHEBI:58228"/>
    </ligand>
</feature>
<feature type="binding site" evidence="1">
    <location>
        <position position="93"/>
    </location>
    <ligand>
        <name>L-aspartate</name>
        <dbReference type="ChEBI" id="CHEBI:29991"/>
    </ligand>
</feature>
<feature type="binding site" evidence="1">
    <location>
        <position position="115"/>
    </location>
    <ligand>
        <name>carbamoyl phosphate</name>
        <dbReference type="ChEBI" id="CHEBI:58228"/>
    </ligand>
</feature>
<feature type="binding site" evidence="1">
    <location>
        <position position="145"/>
    </location>
    <ligand>
        <name>carbamoyl phosphate</name>
        <dbReference type="ChEBI" id="CHEBI:58228"/>
    </ligand>
</feature>
<feature type="binding site" evidence="1">
    <location>
        <position position="148"/>
    </location>
    <ligand>
        <name>carbamoyl phosphate</name>
        <dbReference type="ChEBI" id="CHEBI:58228"/>
    </ligand>
</feature>
<feature type="binding site" evidence="1">
    <location>
        <position position="178"/>
    </location>
    <ligand>
        <name>L-aspartate</name>
        <dbReference type="ChEBI" id="CHEBI:29991"/>
    </ligand>
</feature>
<feature type="binding site" evidence="1">
    <location>
        <position position="233"/>
    </location>
    <ligand>
        <name>L-aspartate</name>
        <dbReference type="ChEBI" id="CHEBI:29991"/>
    </ligand>
</feature>
<feature type="binding site" evidence="1">
    <location>
        <position position="274"/>
    </location>
    <ligand>
        <name>carbamoyl phosphate</name>
        <dbReference type="ChEBI" id="CHEBI:58228"/>
    </ligand>
</feature>
<feature type="binding site" evidence="1">
    <location>
        <position position="275"/>
    </location>
    <ligand>
        <name>carbamoyl phosphate</name>
        <dbReference type="ChEBI" id="CHEBI:58228"/>
    </ligand>
</feature>
<gene>
    <name evidence="1" type="primary">pyrB</name>
    <name type="ordered locus">Mfla_2102</name>
</gene>
<reference key="1">
    <citation type="submission" date="2006-03" db="EMBL/GenBank/DDBJ databases">
        <title>Complete sequence of Methylobacillus flagellatus KT.</title>
        <authorList>
            <consortium name="US DOE Joint Genome Institute"/>
            <person name="Copeland A."/>
            <person name="Lucas S."/>
            <person name="Lapidus A."/>
            <person name="Barry K."/>
            <person name="Detter J.C."/>
            <person name="Glavina del Rio T."/>
            <person name="Hammon N."/>
            <person name="Israni S."/>
            <person name="Dalin E."/>
            <person name="Tice H."/>
            <person name="Pitluck S."/>
            <person name="Brettin T."/>
            <person name="Bruce D."/>
            <person name="Han C."/>
            <person name="Tapia R."/>
            <person name="Saunders E."/>
            <person name="Gilna P."/>
            <person name="Schmutz J."/>
            <person name="Larimer F."/>
            <person name="Land M."/>
            <person name="Kyrpides N."/>
            <person name="Anderson I."/>
            <person name="Richardson P."/>
        </authorList>
    </citation>
    <scope>NUCLEOTIDE SEQUENCE [LARGE SCALE GENOMIC DNA]</scope>
    <source>
        <strain>ATCC 51484 / DSM 6875 / VKM B-1610 / KT</strain>
    </source>
</reference>
<organism>
    <name type="scientific">Methylobacillus flagellatus (strain ATCC 51484 / DSM 6875 / VKM B-1610 / KT)</name>
    <dbReference type="NCBI Taxonomy" id="265072"/>
    <lineage>
        <taxon>Bacteria</taxon>
        <taxon>Pseudomonadati</taxon>
        <taxon>Pseudomonadota</taxon>
        <taxon>Betaproteobacteria</taxon>
        <taxon>Nitrosomonadales</taxon>
        <taxon>Methylophilaceae</taxon>
        <taxon>Methylobacillus</taxon>
    </lineage>
</organism>
<keyword id="KW-0665">Pyrimidine biosynthesis</keyword>
<keyword id="KW-1185">Reference proteome</keyword>
<keyword id="KW-0808">Transferase</keyword>